<proteinExistence type="inferred from homology"/>
<organism>
    <name type="scientific">Shigella boydii serotype 4 (strain Sb227)</name>
    <dbReference type="NCBI Taxonomy" id="300268"/>
    <lineage>
        <taxon>Bacteria</taxon>
        <taxon>Pseudomonadati</taxon>
        <taxon>Pseudomonadota</taxon>
        <taxon>Gammaproteobacteria</taxon>
        <taxon>Enterobacterales</taxon>
        <taxon>Enterobacteriaceae</taxon>
        <taxon>Shigella</taxon>
    </lineage>
</organism>
<reference key="1">
    <citation type="journal article" date="2005" name="Nucleic Acids Res.">
        <title>Genome dynamics and diversity of Shigella species, the etiologic agents of bacillary dysentery.</title>
        <authorList>
            <person name="Yang F."/>
            <person name="Yang J."/>
            <person name="Zhang X."/>
            <person name="Chen L."/>
            <person name="Jiang Y."/>
            <person name="Yan Y."/>
            <person name="Tang X."/>
            <person name="Wang J."/>
            <person name="Xiong Z."/>
            <person name="Dong J."/>
            <person name="Xue Y."/>
            <person name="Zhu Y."/>
            <person name="Xu X."/>
            <person name="Sun L."/>
            <person name="Chen S."/>
            <person name="Nie H."/>
            <person name="Peng J."/>
            <person name="Xu J."/>
            <person name="Wang Y."/>
            <person name="Yuan Z."/>
            <person name="Wen Y."/>
            <person name="Yao Z."/>
            <person name="Shen Y."/>
            <person name="Qiang B."/>
            <person name="Hou Y."/>
            <person name="Yu J."/>
            <person name="Jin Q."/>
        </authorList>
    </citation>
    <scope>NUCLEOTIDE SEQUENCE [LARGE SCALE GENOMIC DNA]</scope>
    <source>
        <strain>Sb227</strain>
    </source>
</reference>
<gene>
    <name type="primary">ytcA</name>
    <name type="ordered locus">SBO_4114</name>
</gene>
<evidence type="ECO:0000255" key="1"/>
<evidence type="ECO:0000255" key="2">
    <source>
        <dbReference type="PROSITE-ProRule" id="PRU00303"/>
    </source>
</evidence>
<evidence type="ECO:0000305" key="3"/>
<name>YTCA_SHIBS</name>
<feature type="signal peptide" evidence="2">
    <location>
        <begin position="1"/>
        <end position="26"/>
    </location>
</feature>
<feature type="chain" id="PRO_0000311873" description="Uncharacterized protein YtcA">
    <location>
        <begin position="27"/>
        <end position="91"/>
    </location>
</feature>
<feature type="transmembrane region" description="Helical" evidence="1">
    <location>
        <begin position="33"/>
        <end position="53"/>
    </location>
</feature>
<feature type="transmembrane region" description="Helical" evidence="1">
    <location>
        <begin position="70"/>
        <end position="90"/>
    </location>
</feature>
<feature type="lipid moiety-binding region" description="N-palmitoyl cysteine" evidence="2">
    <location>
        <position position="27"/>
    </location>
</feature>
<feature type="lipid moiety-binding region" description="S-diacylglycerol cysteine" evidence="2">
    <location>
        <position position="27"/>
    </location>
</feature>
<comment type="subcellular location">
    <subcellularLocation>
        <location evidence="2">Cell membrane</location>
        <topology evidence="2">Lipid-anchor</topology>
    </subcellularLocation>
    <subcellularLocation>
        <location evidence="3">Membrane</location>
        <topology evidence="3">Multi-pass membrane protein</topology>
    </subcellularLocation>
</comment>
<comment type="similarity">
    <text evidence="3">Belongs to the YtcA family.</text>
</comment>
<comment type="sequence caution" evidence="3">
    <conflict type="erroneous initiation">
        <sequence resource="EMBL-CDS" id="ABB68543"/>
    </conflict>
</comment>
<keyword id="KW-1003">Cell membrane</keyword>
<keyword id="KW-0449">Lipoprotein</keyword>
<keyword id="KW-0472">Membrane</keyword>
<keyword id="KW-0564">Palmitate</keyword>
<keyword id="KW-0732">Signal</keyword>
<keyword id="KW-0812">Transmembrane</keyword>
<keyword id="KW-1133">Transmembrane helix</keyword>
<accession>Q31TR5</accession>
<sequence>MPTVLSRMAMQLKKTAWIIPVFMVSGCSLSPAIPVIGAYYPSWFFCAIASLILTLITRRIIQRANINLAFVGIIYTALFAVYAMLFWLAFF</sequence>
<dbReference type="EMBL" id="CP000036">
    <property type="protein sequence ID" value="ABB68543.1"/>
    <property type="status" value="ALT_INIT"/>
    <property type="molecule type" value="Genomic_DNA"/>
</dbReference>
<dbReference type="RefSeq" id="WP_004988094.1">
    <property type="nucleotide sequence ID" value="NC_007613.1"/>
</dbReference>
<dbReference type="KEGG" id="sbo:SBO_4114"/>
<dbReference type="HOGENOM" id="CLU_157779_1_0_6"/>
<dbReference type="Proteomes" id="UP000007067">
    <property type="component" value="Chromosome"/>
</dbReference>
<dbReference type="GO" id="GO:0005886">
    <property type="term" value="C:plasma membrane"/>
    <property type="evidence" value="ECO:0007669"/>
    <property type="project" value="UniProtKB-SubCell"/>
</dbReference>
<dbReference type="InterPro" id="IPR031381">
    <property type="entry name" value="YtcA"/>
</dbReference>
<dbReference type="Pfam" id="PF17090">
    <property type="entry name" value="Ytca"/>
    <property type="match status" value="1"/>
</dbReference>
<dbReference type="PROSITE" id="PS51257">
    <property type="entry name" value="PROKAR_LIPOPROTEIN"/>
    <property type="match status" value="1"/>
</dbReference>
<protein>
    <recommendedName>
        <fullName>Uncharacterized protein YtcA</fullName>
    </recommendedName>
</protein>